<geneLocation type="plasmid">
    <name>pROB02</name>
</geneLocation>
<comment type="catalytic activity">
    <reaction evidence="1">
        <text>(S)-4-hydroxy-2-oxopentanoate = acetaldehyde + pyruvate</text>
        <dbReference type="Rhea" id="RHEA:22624"/>
        <dbReference type="ChEBI" id="CHEBI:15343"/>
        <dbReference type="ChEBI" id="CHEBI:15361"/>
        <dbReference type="ChEBI" id="CHEBI:73143"/>
        <dbReference type="EC" id="4.1.3.39"/>
    </reaction>
</comment>
<comment type="similarity">
    <text evidence="1">Belongs to the 4-hydroxy-2-oxovalerate aldolase family.</text>
</comment>
<organism>
    <name type="scientific">Rhodococcus opacus (strain B4)</name>
    <dbReference type="NCBI Taxonomy" id="632772"/>
    <lineage>
        <taxon>Bacteria</taxon>
        <taxon>Bacillati</taxon>
        <taxon>Actinomycetota</taxon>
        <taxon>Actinomycetes</taxon>
        <taxon>Mycobacteriales</taxon>
        <taxon>Nocardiaceae</taxon>
        <taxon>Rhodococcus</taxon>
    </lineage>
</organism>
<proteinExistence type="inferred from homology"/>
<name>HOA6_RHOOB</name>
<reference key="1">
    <citation type="submission" date="2009-03" db="EMBL/GenBank/DDBJ databases">
        <title>Comparison of the complete genome sequences of Rhodococcus erythropolis PR4 and Rhodococcus opacus B4.</title>
        <authorList>
            <person name="Takarada H."/>
            <person name="Sekine M."/>
            <person name="Hosoyama A."/>
            <person name="Yamada R."/>
            <person name="Fujisawa T."/>
            <person name="Omata S."/>
            <person name="Shimizu A."/>
            <person name="Tsukatani N."/>
            <person name="Tanikawa S."/>
            <person name="Fujita N."/>
            <person name="Harayama S."/>
        </authorList>
    </citation>
    <scope>NUCLEOTIDE SEQUENCE [LARGE SCALE GENOMIC DNA]</scope>
    <source>
        <strain>B4</strain>
    </source>
</reference>
<dbReference type="EC" id="4.1.3.39" evidence="1"/>
<dbReference type="EMBL" id="AP011117">
    <property type="protein sequence ID" value="BAH47231.1"/>
    <property type="molecule type" value="Genomic_DNA"/>
</dbReference>
<dbReference type="SMR" id="C1BE28"/>
<dbReference type="KEGG" id="rop:ROP_pROB02-02240"/>
<dbReference type="PATRIC" id="fig|632772.20.peg.8608"/>
<dbReference type="HOGENOM" id="CLU_049173_0_0_11"/>
<dbReference type="OrthoDB" id="9803573at2"/>
<dbReference type="Proteomes" id="UP000002212">
    <property type="component" value="Plasmid pROB02"/>
</dbReference>
<dbReference type="GO" id="GO:0003852">
    <property type="term" value="F:2-isopropylmalate synthase activity"/>
    <property type="evidence" value="ECO:0007669"/>
    <property type="project" value="TreeGrafter"/>
</dbReference>
<dbReference type="GO" id="GO:0008701">
    <property type="term" value="F:4-hydroxy-2-oxovalerate aldolase activity"/>
    <property type="evidence" value="ECO:0007669"/>
    <property type="project" value="UniProtKB-UniRule"/>
</dbReference>
<dbReference type="GO" id="GO:0030145">
    <property type="term" value="F:manganese ion binding"/>
    <property type="evidence" value="ECO:0007669"/>
    <property type="project" value="UniProtKB-UniRule"/>
</dbReference>
<dbReference type="GO" id="GO:0009056">
    <property type="term" value="P:catabolic process"/>
    <property type="evidence" value="ECO:0007669"/>
    <property type="project" value="UniProtKB-KW"/>
</dbReference>
<dbReference type="GO" id="GO:0009098">
    <property type="term" value="P:L-leucine biosynthetic process"/>
    <property type="evidence" value="ECO:0007669"/>
    <property type="project" value="TreeGrafter"/>
</dbReference>
<dbReference type="CDD" id="cd07943">
    <property type="entry name" value="DRE_TIM_HOA"/>
    <property type="match status" value="1"/>
</dbReference>
<dbReference type="Gene3D" id="1.10.8.60">
    <property type="match status" value="1"/>
</dbReference>
<dbReference type="Gene3D" id="3.20.20.70">
    <property type="entry name" value="Aldolase class I"/>
    <property type="match status" value="1"/>
</dbReference>
<dbReference type="HAMAP" id="MF_01656">
    <property type="entry name" value="HOA"/>
    <property type="match status" value="1"/>
</dbReference>
<dbReference type="InterPro" id="IPR050073">
    <property type="entry name" value="2-IPM_HCS-like"/>
</dbReference>
<dbReference type="InterPro" id="IPR017629">
    <property type="entry name" value="4OH_2_O-val_aldolase"/>
</dbReference>
<dbReference type="InterPro" id="IPR013785">
    <property type="entry name" value="Aldolase_TIM"/>
</dbReference>
<dbReference type="InterPro" id="IPR012425">
    <property type="entry name" value="DmpG_comm"/>
</dbReference>
<dbReference type="InterPro" id="IPR035685">
    <property type="entry name" value="DRE_TIM_HOA"/>
</dbReference>
<dbReference type="InterPro" id="IPR000891">
    <property type="entry name" value="PYR_CT"/>
</dbReference>
<dbReference type="NCBIfam" id="TIGR03217">
    <property type="entry name" value="4OH_2_O_val_ald"/>
    <property type="match status" value="1"/>
</dbReference>
<dbReference type="NCBIfam" id="NF006049">
    <property type="entry name" value="PRK08195.1"/>
    <property type="match status" value="1"/>
</dbReference>
<dbReference type="PANTHER" id="PTHR10277:SF9">
    <property type="entry name" value="2-ISOPROPYLMALATE SYNTHASE 1, CHLOROPLASTIC-RELATED"/>
    <property type="match status" value="1"/>
</dbReference>
<dbReference type="PANTHER" id="PTHR10277">
    <property type="entry name" value="HOMOCITRATE SYNTHASE-RELATED"/>
    <property type="match status" value="1"/>
</dbReference>
<dbReference type="Pfam" id="PF07836">
    <property type="entry name" value="DmpG_comm"/>
    <property type="match status" value="1"/>
</dbReference>
<dbReference type="Pfam" id="PF00682">
    <property type="entry name" value="HMGL-like"/>
    <property type="match status" value="1"/>
</dbReference>
<dbReference type="SUPFAM" id="SSF51569">
    <property type="entry name" value="Aldolase"/>
    <property type="match status" value="1"/>
</dbReference>
<dbReference type="SUPFAM" id="SSF89000">
    <property type="entry name" value="post-HMGL domain-like"/>
    <property type="match status" value="1"/>
</dbReference>
<dbReference type="PROSITE" id="PS50991">
    <property type="entry name" value="PYR_CT"/>
    <property type="match status" value="1"/>
</dbReference>
<accession>C1BE28</accession>
<gene>
    <name type="ordered locus">ROP_pROB02-02240</name>
</gene>
<evidence type="ECO:0000255" key="1">
    <source>
        <dbReference type="HAMAP-Rule" id="MF_01656"/>
    </source>
</evidence>
<feature type="chain" id="PRO_0000387900" description="4-hydroxy-2-oxovalerate aldolase 6">
    <location>
        <begin position="1"/>
        <end position="339"/>
    </location>
</feature>
<feature type="domain" description="Pyruvate carboxyltransferase" evidence="1">
    <location>
        <begin position="5"/>
        <end position="257"/>
    </location>
</feature>
<feature type="active site" description="Proton acceptor" evidence="1">
    <location>
        <position position="17"/>
    </location>
</feature>
<feature type="binding site" evidence="1">
    <location>
        <begin position="13"/>
        <end position="14"/>
    </location>
    <ligand>
        <name>substrate</name>
    </ligand>
</feature>
<feature type="binding site" evidence="1">
    <location>
        <position position="14"/>
    </location>
    <ligand>
        <name>Mn(2+)</name>
        <dbReference type="ChEBI" id="CHEBI:29035"/>
    </ligand>
</feature>
<feature type="binding site" evidence="1">
    <location>
        <position position="167"/>
    </location>
    <ligand>
        <name>substrate</name>
    </ligand>
</feature>
<feature type="binding site" evidence="1">
    <location>
        <position position="196"/>
    </location>
    <ligand>
        <name>Mn(2+)</name>
        <dbReference type="ChEBI" id="CHEBI:29035"/>
    </ligand>
</feature>
<feature type="binding site" evidence="1">
    <location>
        <position position="196"/>
    </location>
    <ligand>
        <name>substrate</name>
    </ligand>
</feature>
<feature type="binding site" evidence="1">
    <location>
        <position position="198"/>
    </location>
    <ligand>
        <name>Mn(2+)</name>
        <dbReference type="ChEBI" id="CHEBI:29035"/>
    </ligand>
</feature>
<feature type="binding site" evidence="1">
    <location>
        <position position="287"/>
    </location>
    <ligand>
        <name>substrate</name>
    </ligand>
</feature>
<feature type="site" description="Transition state stabilizer" evidence="1">
    <location>
        <position position="13"/>
    </location>
</feature>
<sequence length="339" mass="36113">MTTRLFIQDVTLRDGMHAVRHRITPDDVGKIVAALDAAGVDGIEVAHGDGLAGGSLNYGPGSNTDWEWIEAAAANLTHARLTTLLLPGIGTIAELEHAFRLGVRSVRVATHCTEADVAAQHIGKARELGMDVSGFLMMSHMTTAPELAAQAKLMESYGAHCVYVTDSGGRLTMDGVRDRVRAYRDVLDEGTEIGIHAHENLSLSVANSVVAVEEGVTRVDASLAGHGAGAGNCPIEPFIAVADLQGWKHNSALFALQDAADDLVRPLQDRPVRVDRETLTLGYAGVYSSFLRHAEAASQRYGIDVRTILLEVGRRGLVGGQEDLIVDIALDLRSRAGGN</sequence>
<protein>
    <recommendedName>
        <fullName evidence="1">4-hydroxy-2-oxovalerate aldolase 6</fullName>
        <shortName evidence="1">HOA 6</shortName>
        <ecNumber evidence="1">4.1.3.39</ecNumber>
    </recommendedName>
    <alternativeName>
        <fullName evidence="1">4-hydroxy-2-keto-pentanoic acid aldolase 6</fullName>
    </alternativeName>
    <alternativeName>
        <fullName evidence="1">4-hydroxy-2-oxopentanoate aldolase 6</fullName>
    </alternativeName>
</protein>
<keyword id="KW-0058">Aromatic hydrocarbons catabolism</keyword>
<keyword id="KW-0456">Lyase</keyword>
<keyword id="KW-0464">Manganese</keyword>
<keyword id="KW-0479">Metal-binding</keyword>
<keyword id="KW-0614">Plasmid</keyword>